<proteinExistence type="evidence at transcript level"/>
<organism>
    <name type="scientific">Pongo abelii</name>
    <name type="common">Sumatran orangutan</name>
    <name type="synonym">Pongo pygmaeus abelii</name>
    <dbReference type="NCBI Taxonomy" id="9601"/>
    <lineage>
        <taxon>Eukaryota</taxon>
        <taxon>Metazoa</taxon>
        <taxon>Chordata</taxon>
        <taxon>Craniata</taxon>
        <taxon>Vertebrata</taxon>
        <taxon>Euteleostomi</taxon>
        <taxon>Mammalia</taxon>
        <taxon>Eutheria</taxon>
        <taxon>Euarchontoglires</taxon>
        <taxon>Primates</taxon>
        <taxon>Haplorrhini</taxon>
        <taxon>Catarrhini</taxon>
        <taxon>Hominidae</taxon>
        <taxon>Pongo</taxon>
    </lineage>
</organism>
<protein>
    <recommendedName>
        <fullName>Protein Wnt-5b</fullName>
    </recommendedName>
</protein>
<evidence type="ECO:0000250" key="1"/>
<evidence type="ECO:0000250" key="2">
    <source>
        <dbReference type="UniProtKB" id="P27467"/>
    </source>
</evidence>
<evidence type="ECO:0000250" key="3">
    <source>
        <dbReference type="UniProtKB" id="P28026"/>
    </source>
</evidence>
<evidence type="ECO:0000250" key="4">
    <source>
        <dbReference type="UniProtKB" id="P56704"/>
    </source>
</evidence>
<evidence type="ECO:0000255" key="5"/>
<evidence type="ECO:0000305" key="6"/>
<reference key="1">
    <citation type="submission" date="2004-11" db="EMBL/GenBank/DDBJ databases">
        <authorList>
            <consortium name="The German cDNA consortium"/>
        </authorList>
    </citation>
    <scope>NUCLEOTIDE SEQUENCE [LARGE SCALE MRNA]</scope>
    <source>
        <tissue>Brain cortex</tissue>
    </source>
</reference>
<gene>
    <name type="primary">WNT5B</name>
</gene>
<keyword id="KW-0217">Developmental protein</keyword>
<keyword id="KW-1015">Disulfide bond</keyword>
<keyword id="KW-0272">Extracellular matrix</keyword>
<keyword id="KW-0325">Glycoprotein</keyword>
<keyword id="KW-0449">Lipoprotein</keyword>
<keyword id="KW-1185">Reference proteome</keyword>
<keyword id="KW-0964">Secreted</keyword>
<keyword id="KW-0732">Signal</keyword>
<keyword id="KW-0879">Wnt signaling pathway</keyword>
<accession>Q5NVK2</accession>
<feature type="signal peptide" evidence="5">
    <location>
        <begin position="1"/>
        <end position="17"/>
    </location>
</feature>
<feature type="chain" id="PRO_0000229769" description="Protein Wnt-5b">
    <location>
        <begin position="18"/>
        <end position="359"/>
    </location>
</feature>
<feature type="lipid moiety-binding region" description="O-palmitoleoyl serine; by PORCN" evidence="4">
    <location>
        <position position="223"/>
    </location>
</feature>
<feature type="glycosylation site" description="N-linked (GlcNAc...) asparagine" evidence="5">
    <location>
        <position position="93"/>
    </location>
</feature>
<feature type="glycosylation site" description="N-linked (GlcNAc...) asparagine" evidence="5">
    <location>
        <position position="99"/>
    </location>
</feature>
<feature type="glycosylation site" description="N-linked (GlcNAc...) asparagine" evidence="5">
    <location>
        <position position="291"/>
    </location>
</feature>
<feature type="glycosylation site" description="N-linked (GlcNAc...) asparagine" evidence="5">
    <location>
        <position position="305"/>
    </location>
</feature>
<feature type="disulfide bond" evidence="3">
    <location>
        <begin position="83"/>
        <end position="94"/>
    </location>
</feature>
<feature type="disulfide bond" evidence="3">
    <location>
        <begin position="133"/>
        <end position="141"/>
    </location>
</feature>
<feature type="disulfide bond" evidence="3">
    <location>
        <begin position="143"/>
        <end position="161"/>
    </location>
</feature>
<feature type="disulfide bond" evidence="3">
    <location>
        <begin position="217"/>
        <end position="231"/>
    </location>
</feature>
<feature type="disulfide bond" evidence="3">
    <location>
        <begin position="219"/>
        <end position="226"/>
    </location>
</feature>
<feature type="disulfide bond" evidence="3">
    <location>
        <begin position="288"/>
        <end position="319"/>
    </location>
</feature>
<feature type="disulfide bond" evidence="3">
    <location>
        <begin position="304"/>
        <end position="314"/>
    </location>
</feature>
<feature type="disulfide bond" evidence="3">
    <location>
        <begin position="318"/>
        <end position="358"/>
    </location>
</feature>
<feature type="disulfide bond" evidence="3">
    <location>
        <begin position="334"/>
        <end position="349"/>
    </location>
</feature>
<feature type="disulfide bond" evidence="3">
    <location>
        <begin position="336"/>
        <end position="346"/>
    </location>
</feature>
<feature type="disulfide bond" evidence="3">
    <location>
        <begin position="341"/>
        <end position="342"/>
    </location>
</feature>
<name>WNT5B_PONAB</name>
<dbReference type="EMBL" id="CR926024">
    <property type="protein sequence ID" value="CAI29661.1"/>
    <property type="molecule type" value="mRNA"/>
</dbReference>
<dbReference type="RefSeq" id="NP_001127098.1">
    <property type="nucleotide sequence ID" value="NM_001133626.3"/>
</dbReference>
<dbReference type="RefSeq" id="XP_024112066.2">
    <property type="nucleotide sequence ID" value="XM_024256298.3"/>
</dbReference>
<dbReference type="RefSeq" id="XP_054382501.1">
    <property type="nucleotide sequence ID" value="XM_054526526.2"/>
</dbReference>
<dbReference type="RefSeq" id="XP_054382502.1">
    <property type="nucleotide sequence ID" value="XM_054526527.2"/>
</dbReference>
<dbReference type="RefSeq" id="XP_063567694.1">
    <property type="nucleotide sequence ID" value="XM_063711624.1"/>
</dbReference>
<dbReference type="SMR" id="Q5NVK2"/>
<dbReference type="FunCoup" id="Q5NVK2">
    <property type="interactions" value="603"/>
</dbReference>
<dbReference type="STRING" id="9601.ENSPPYP00000004719"/>
<dbReference type="GlyCosmos" id="Q5NVK2">
    <property type="glycosylation" value="4 sites, No reported glycans"/>
</dbReference>
<dbReference type="Ensembl" id="ENSPPYT00000004905.3">
    <property type="protein sequence ID" value="ENSPPYP00000004719.2"/>
    <property type="gene ID" value="ENSPPYG00000004141.3"/>
</dbReference>
<dbReference type="GeneID" id="100174132"/>
<dbReference type="KEGG" id="pon:100174132"/>
<dbReference type="CTD" id="81029"/>
<dbReference type="eggNOG" id="KOG3913">
    <property type="taxonomic scope" value="Eukaryota"/>
</dbReference>
<dbReference type="GeneTree" id="ENSGT00940000157617"/>
<dbReference type="HOGENOM" id="CLU_033039_0_1_1"/>
<dbReference type="InParanoid" id="Q5NVK2"/>
<dbReference type="OMA" id="IQVERCH"/>
<dbReference type="OrthoDB" id="5945655at2759"/>
<dbReference type="TreeFam" id="TF105310"/>
<dbReference type="Proteomes" id="UP000001595">
    <property type="component" value="Chromosome 12"/>
</dbReference>
<dbReference type="GO" id="GO:0009986">
    <property type="term" value="C:cell surface"/>
    <property type="evidence" value="ECO:0007669"/>
    <property type="project" value="Ensembl"/>
</dbReference>
<dbReference type="GO" id="GO:0031012">
    <property type="term" value="C:extracellular matrix"/>
    <property type="evidence" value="ECO:0007669"/>
    <property type="project" value="Ensembl"/>
</dbReference>
<dbReference type="GO" id="GO:0005615">
    <property type="term" value="C:extracellular space"/>
    <property type="evidence" value="ECO:0007669"/>
    <property type="project" value="TreeGrafter"/>
</dbReference>
<dbReference type="GO" id="GO:0005125">
    <property type="term" value="F:cytokine activity"/>
    <property type="evidence" value="ECO:0007669"/>
    <property type="project" value="TreeGrafter"/>
</dbReference>
<dbReference type="GO" id="GO:0005109">
    <property type="term" value="F:frizzled binding"/>
    <property type="evidence" value="ECO:0007669"/>
    <property type="project" value="TreeGrafter"/>
</dbReference>
<dbReference type="GO" id="GO:0005102">
    <property type="term" value="F:signaling receptor binding"/>
    <property type="evidence" value="ECO:0000250"/>
    <property type="project" value="UniProtKB"/>
</dbReference>
<dbReference type="GO" id="GO:0060070">
    <property type="term" value="P:canonical Wnt signaling pathway"/>
    <property type="evidence" value="ECO:0007669"/>
    <property type="project" value="TreeGrafter"/>
</dbReference>
<dbReference type="GO" id="GO:0045165">
    <property type="term" value="P:cell fate commitment"/>
    <property type="evidence" value="ECO:0007669"/>
    <property type="project" value="TreeGrafter"/>
</dbReference>
<dbReference type="GO" id="GO:0002062">
    <property type="term" value="P:chondrocyte differentiation"/>
    <property type="evidence" value="ECO:0007669"/>
    <property type="project" value="Ensembl"/>
</dbReference>
<dbReference type="GO" id="GO:0042692">
    <property type="term" value="P:muscle cell differentiation"/>
    <property type="evidence" value="ECO:0000250"/>
    <property type="project" value="UniProtKB"/>
</dbReference>
<dbReference type="GO" id="GO:0090090">
    <property type="term" value="P:negative regulation of canonical Wnt signaling pathway"/>
    <property type="evidence" value="ECO:0007669"/>
    <property type="project" value="Ensembl"/>
</dbReference>
<dbReference type="GO" id="GO:0030182">
    <property type="term" value="P:neuron differentiation"/>
    <property type="evidence" value="ECO:0007669"/>
    <property type="project" value="TreeGrafter"/>
</dbReference>
<dbReference type="GO" id="GO:0030335">
    <property type="term" value="P:positive regulation of cell migration"/>
    <property type="evidence" value="ECO:0000250"/>
    <property type="project" value="UniProtKB"/>
</dbReference>
<dbReference type="GO" id="GO:1904105">
    <property type="term" value="P:positive regulation of convergent extension involved in gastrulation"/>
    <property type="evidence" value="ECO:0000250"/>
    <property type="project" value="UniProtKB"/>
</dbReference>
<dbReference type="GO" id="GO:0045600">
    <property type="term" value="P:positive regulation of fat cell differentiation"/>
    <property type="evidence" value="ECO:0007669"/>
    <property type="project" value="Ensembl"/>
</dbReference>
<dbReference type="GO" id="GO:2000052">
    <property type="term" value="P:positive regulation of non-canonical Wnt signaling pathway"/>
    <property type="evidence" value="ECO:0000250"/>
    <property type="project" value="UniProtKB"/>
</dbReference>
<dbReference type="CDD" id="cd19348">
    <property type="entry name" value="Wnt_Wnt5b"/>
    <property type="match status" value="1"/>
</dbReference>
<dbReference type="FunFam" id="3.30.2460.20:FF:000001">
    <property type="entry name" value="Wnt homolog"/>
    <property type="match status" value="1"/>
</dbReference>
<dbReference type="Gene3D" id="3.30.2460.20">
    <property type="match status" value="1"/>
</dbReference>
<dbReference type="InterPro" id="IPR005817">
    <property type="entry name" value="Wnt"/>
</dbReference>
<dbReference type="InterPro" id="IPR043158">
    <property type="entry name" value="Wnt_C"/>
</dbReference>
<dbReference type="InterPro" id="IPR018161">
    <property type="entry name" value="Wnt_CS"/>
</dbReference>
<dbReference type="PANTHER" id="PTHR12027:SF87">
    <property type="entry name" value="PROTEIN WNT-5B"/>
    <property type="match status" value="1"/>
</dbReference>
<dbReference type="PANTHER" id="PTHR12027">
    <property type="entry name" value="WNT RELATED"/>
    <property type="match status" value="1"/>
</dbReference>
<dbReference type="Pfam" id="PF00110">
    <property type="entry name" value="wnt"/>
    <property type="match status" value="1"/>
</dbReference>
<dbReference type="PRINTS" id="PR01349">
    <property type="entry name" value="WNTPROTEIN"/>
</dbReference>
<dbReference type="SMART" id="SM00097">
    <property type="entry name" value="WNT1"/>
    <property type="match status" value="1"/>
</dbReference>
<dbReference type="PROSITE" id="PS00246">
    <property type="entry name" value="WNT1"/>
    <property type="match status" value="1"/>
</dbReference>
<comment type="function">
    <text evidence="1">Ligand for members of the frizzled family of seven transmembrane receptors. Probable developmental protein. May be a signaling molecule which affects the development of discrete regions of tissues. Is likely to signal over only few cell diameters (By similarity).</text>
</comment>
<comment type="subunit">
    <text evidence="1">Interacts with PORCN.</text>
</comment>
<comment type="subcellular location">
    <subcellularLocation>
        <location evidence="1">Secreted</location>
        <location evidence="1">Extracellular space</location>
        <location evidence="1">Extracellular matrix</location>
    </subcellularLocation>
</comment>
<comment type="PTM">
    <text evidence="2 4">Palmitoleoylation is required for efficient binding to frizzled receptors. Depalmitoleoylation leads to Wnt signaling pathway inhibition.</text>
</comment>
<comment type="similarity">
    <text evidence="6">Belongs to the Wnt family.</text>
</comment>
<sequence>MPSLLLLFTAALLSSWAQLLTDANSWWSLALNPVQRPEMFIIGAQPVCSQLPGLSPGQRKLCQLYQEHMAYIGEGAKTGIKECQHQFRQRRWNCSTVDNASVFGRVMQIGSRETAFTYAVSAAGVVNAISRACREGELSTCGCSRTARPKDLPRDWLWGGCGDNVEYGYRFAKEFVDAREREKNFAKGSEEQGRVLMNLQNNEAGRRAVYKMADVACKCHGVSGSCSLKTCWLQLAEFRKVGDRLKEKYDSAAAMRVTRKGRLELVNSRFTQPTPEDLVYVDPSPDYCLRNESTGSLGTQGRLCNKTSEGMDGCELMCCGRGYNQFKSVQVERCHCKFHWCCFVKCKKCTEIVDQYICK</sequence>